<evidence type="ECO:0000250" key="1">
    <source>
        <dbReference type="UniProtKB" id="P32500"/>
    </source>
</evidence>
<evidence type="ECO:0000255" key="2"/>
<evidence type="ECO:0000269" key="3">
    <source>
    </source>
</evidence>
<evidence type="ECO:0000305" key="4"/>
<gene>
    <name type="primary">cut11</name>
    <name type="synonym">ndc1</name>
    <name type="ORF">SPAC1786.03</name>
    <name type="ORF">SPAC24C9.01</name>
</gene>
<keyword id="KW-0963">Cytoplasm</keyword>
<keyword id="KW-0206">Cytoskeleton</keyword>
<keyword id="KW-0472">Membrane</keyword>
<keyword id="KW-0509">mRNA transport</keyword>
<keyword id="KW-0906">Nuclear pore complex</keyword>
<keyword id="KW-0539">Nucleus</keyword>
<keyword id="KW-0653">Protein transport</keyword>
<keyword id="KW-1185">Reference proteome</keyword>
<keyword id="KW-0811">Translocation</keyword>
<keyword id="KW-0812">Transmembrane</keyword>
<keyword id="KW-1133">Transmembrane helix</keyword>
<keyword id="KW-0813">Transport</keyword>
<dbReference type="EMBL" id="AF079307">
    <property type="protein sequence ID" value="AAC31554.1"/>
    <property type="molecule type" value="mRNA"/>
</dbReference>
<dbReference type="EMBL" id="CU329670">
    <property type="protein sequence ID" value="CAB57434.2"/>
    <property type="molecule type" value="Genomic_DNA"/>
</dbReference>
<dbReference type="PIR" id="T47249">
    <property type="entry name" value="T47249"/>
</dbReference>
<dbReference type="RefSeq" id="NP_594025.2">
    <property type="nucleotide sequence ID" value="NM_001019450.2"/>
</dbReference>
<dbReference type="SMR" id="O13961"/>
<dbReference type="BioGRID" id="278637">
    <property type="interactions" value="366"/>
</dbReference>
<dbReference type="FunCoup" id="O13961">
    <property type="interactions" value="64"/>
</dbReference>
<dbReference type="IntAct" id="O13961">
    <property type="interactions" value="2"/>
</dbReference>
<dbReference type="MINT" id="O13961"/>
<dbReference type="STRING" id="284812.O13961"/>
<dbReference type="iPTMnet" id="O13961"/>
<dbReference type="PaxDb" id="4896-SPAC1786.03.1"/>
<dbReference type="EnsemblFungi" id="SPAC1786.03.1">
    <property type="protein sequence ID" value="SPAC1786.03.1:pep"/>
    <property type="gene ID" value="SPAC1786.03"/>
</dbReference>
<dbReference type="GeneID" id="2542161"/>
<dbReference type="KEGG" id="spo:2542161"/>
<dbReference type="PomBase" id="SPAC1786.03">
    <property type="gene designation" value="cut11"/>
</dbReference>
<dbReference type="VEuPathDB" id="FungiDB:SPAC1786.03"/>
<dbReference type="eggNOG" id="ENOG502S1MG">
    <property type="taxonomic scope" value="Eukaryota"/>
</dbReference>
<dbReference type="HOGENOM" id="CLU_457203_0_0_1"/>
<dbReference type="InParanoid" id="O13961"/>
<dbReference type="OMA" id="WQTANLF"/>
<dbReference type="PhylomeDB" id="O13961"/>
<dbReference type="Reactome" id="R-SPO-159227">
    <property type="pathway name" value="Transport of the SLBP independent Mature mRNA"/>
</dbReference>
<dbReference type="Reactome" id="R-SPO-159231">
    <property type="pathway name" value="Transport of Mature mRNA Derived from an Intronless Transcript"/>
</dbReference>
<dbReference type="Reactome" id="R-SPO-159236">
    <property type="pathway name" value="Transport of Mature mRNA derived from an Intron-Containing Transcript"/>
</dbReference>
<dbReference type="Reactome" id="R-SPO-3371453">
    <property type="pathway name" value="Regulation of HSF1-mediated heat shock response"/>
</dbReference>
<dbReference type="Reactome" id="R-SPO-4085377">
    <property type="pathway name" value="SUMOylation of SUMOylation proteins"/>
</dbReference>
<dbReference type="Reactome" id="R-SPO-4551638">
    <property type="pathway name" value="SUMOylation of chromatin organization proteins"/>
</dbReference>
<dbReference type="Reactome" id="R-SPO-4570464">
    <property type="pathway name" value="SUMOylation of RNA binding proteins"/>
</dbReference>
<dbReference type="Reactome" id="R-SPO-5578749">
    <property type="pathway name" value="Transcriptional regulation by small RNAs"/>
</dbReference>
<dbReference type="Reactome" id="R-SPO-9615933">
    <property type="pathway name" value="Postmitotic nuclear pore complex (NPC) reformation"/>
</dbReference>
<dbReference type="CD-CODE" id="576F0A76">
    <property type="entry name" value="Centrosome"/>
</dbReference>
<dbReference type="PRO" id="PR:O13961"/>
<dbReference type="Proteomes" id="UP000002485">
    <property type="component" value="Chromosome I"/>
</dbReference>
<dbReference type="GO" id="GO:0005737">
    <property type="term" value="C:cytoplasm"/>
    <property type="evidence" value="ECO:0007669"/>
    <property type="project" value="UniProtKB-KW"/>
</dbReference>
<dbReference type="GO" id="GO:0140512">
    <property type="term" value="C:mitotic nuclear bridge midzone"/>
    <property type="evidence" value="ECO:0000314"/>
    <property type="project" value="PomBase"/>
</dbReference>
<dbReference type="GO" id="GO:0140599">
    <property type="term" value="C:mitotic nuclear bridge midzone membrane domain"/>
    <property type="evidence" value="ECO:0000314"/>
    <property type="project" value="PomBase"/>
</dbReference>
<dbReference type="GO" id="GO:0044732">
    <property type="term" value="C:mitotic spindle pole body"/>
    <property type="evidence" value="ECO:0000314"/>
    <property type="project" value="PomBase"/>
</dbReference>
<dbReference type="GO" id="GO:0005635">
    <property type="term" value="C:nuclear envelope"/>
    <property type="evidence" value="ECO:0000314"/>
    <property type="project" value="PomBase"/>
</dbReference>
<dbReference type="GO" id="GO:0031965">
    <property type="term" value="C:nuclear membrane"/>
    <property type="evidence" value="ECO:0007669"/>
    <property type="project" value="UniProtKB-SubCell"/>
</dbReference>
<dbReference type="GO" id="GO:0005643">
    <property type="term" value="C:nuclear pore"/>
    <property type="evidence" value="ECO:0000314"/>
    <property type="project" value="PomBase"/>
</dbReference>
<dbReference type="GO" id="GO:0070762">
    <property type="term" value="C:nuclear pore transmembrane ring"/>
    <property type="evidence" value="ECO:0000318"/>
    <property type="project" value="GO_Central"/>
</dbReference>
<dbReference type="GO" id="GO:0005816">
    <property type="term" value="C:spindle pole body"/>
    <property type="evidence" value="ECO:0000318"/>
    <property type="project" value="GO_Central"/>
</dbReference>
<dbReference type="GO" id="GO:0106166">
    <property type="term" value="F:spindle pole body-nuclear membrane anchor activity"/>
    <property type="evidence" value="ECO:0000314"/>
    <property type="project" value="PomBase"/>
</dbReference>
<dbReference type="GO" id="GO:1903087">
    <property type="term" value="P:mitotic spindle pole body duplication"/>
    <property type="evidence" value="ECO:0000315"/>
    <property type="project" value="PomBase"/>
</dbReference>
<dbReference type="GO" id="GO:0140480">
    <property type="term" value="P:mitotic spindle pole body insertion into the nuclear envelope"/>
    <property type="evidence" value="ECO:0000315"/>
    <property type="project" value="PomBase"/>
</dbReference>
<dbReference type="GO" id="GO:1990608">
    <property type="term" value="P:mitotic spindle pole body localization"/>
    <property type="evidence" value="ECO:0000315"/>
    <property type="project" value="PomBase"/>
</dbReference>
<dbReference type="GO" id="GO:0051028">
    <property type="term" value="P:mRNA transport"/>
    <property type="evidence" value="ECO:0007669"/>
    <property type="project" value="UniProtKB-KW"/>
</dbReference>
<dbReference type="GO" id="GO:0006999">
    <property type="term" value="P:nuclear pore organization"/>
    <property type="evidence" value="ECO:0000318"/>
    <property type="project" value="GO_Central"/>
</dbReference>
<dbReference type="GO" id="GO:0015031">
    <property type="term" value="P:protein transport"/>
    <property type="evidence" value="ECO:0007669"/>
    <property type="project" value="UniProtKB-KW"/>
</dbReference>
<dbReference type="GO" id="GO:0070631">
    <property type="term" value="P:spindle pole body localization"/>
    <property type="evidence" value="ECO:0000318"/>
    <property type="project" value="GO_Central"/>
</dbReference>
<dbReference type="InterPro" id="IPR019049">
    <property type="entry name" value="Nucleoporin_prot_Ndc1/Nup"/>
</dbReference>
<dbReference type="PANTHER" id="PTHR13269">
    <property type="entry name" value="NUCLEOPORIN NDC1"/>
    <property type="match status" value="1"/>
</dbReference>
<dbReference type="PANTHER" id="PTHR13269:SF6">
    <property type="entry name" value="NUCLEOPORIN NDC1"/>
    <property type="match status" value="1"/>
</dbReference>
<dbReference type="Pfam" id="PF09531">
    <property type="entry name" value="Ndc1_Nup"/>
    <property type="match status" value="1"/>
</dbReference>
<sequence length="601" mass="69355">MVMLRTSFPSGSRTKAVRYHTLLRPILQQRFLRACFALLCLCCITSYWFSSGPFISLSFWFLSLVRGFVCFFFMFPYFVMLKSRMSTQKVTKQSLGAQLFYDFSPKSFFLVYLTFAVSVSCLCLFYIKGHASSIRLQWIASPNAYELPSLNERFVYMTYFSHILILALTVEHLYLQRDSPSRPVINVSFFNYIFQNLGWLIRFSFRKSIICCLFTPFSYAILRSYIWRFAALLTSCCRRIAYTKTPPKWPLSLRLLLHSFWMAFIVCLTFQIALLIFRVFLYSGPMIRGKLLSARSNDPNGTLVDGMKTKKKPLTECIATEELWFIAKRDPQRIKSIFQDIDRSVSIWQELYSITESRCKELATSLKILQSTGDFSAATSKKSGLTKKTNIPYSPNSNHEEINSIPLRNKNIFVPPSQGHSPLLEKIKKQGSLPSTTPVNEGGISDIIPKSLYDQVIRFISTFYKAPVFGIFRKTLRRQNEALLPNPWLFCVTVNSLTQLVLKSLKYDTYGVVARDISSILAVYCDTFDVLVSYKRSLVKNHSNSTNLDDDFKNLNSAANALHCGIIDITEKFQDFFTQLNLSPRIERRCWVLFREYKSNS</sequence>
<feature type="chain" id="PRO_0000079566" description="Nuclear envelope protein ndc1">
    <location>
        <begin position="1"/>
        <end position="601"/>
    </location>
</feature>
<feature type="topological domain" description="Cytoplasmic" evidence="2">
    <location>
        <begin position="1"/>
        <end position="34"/>
    </location>
</feature>
<feature type="transmembrane region" description="Helical; Name=1" evidence="2">
    <location>
        <begin position="35"/>
        <end position="55"/>
    </location>
</feature>
<feature type="topological domain" description="Perinuclear space" evidence="2">
    <location>
        <begin position="56"/>
        <end position="58"/>
    </location>
</feature>
<feature type="transmembrane region" description="Helical; Name=2" evidence="2">
    <location>
        <begin position="59"/>
        <end position="79"/>
    </location>
</feature>
<feature type="topological domain" description="Cytoplasmic" evidence="2">
    <location>
        <begin position="80"/>
        <end position="106"/>
    </location>
</feature>
<feature type="transmembrane region" description="Helical; Name=3" evidence="2">
    <location>
        <begin position="107"/>
        <end position="127"/>
    </location>
</feature>
<feature type="topological domain" description="Perinuclear space" evidence="2">
    <location>
        <begin position="128"/>
        <end position="153"/>
    </location>
</feature>
<feature type="transmembrane region" description="Helical; Name=4" evidence="2">
    <location>
        <begin position="154"/>
        <end position="174"/>
    </location>
</feature>
<feature type="topological domain" description="Cytoplasmic" evidence="2">
    <location>
        <begin position="175"/>
        <end position="182"/>
    </location>
</feature>
<feature type="transmembrane region" description="Helical; Name=5" evidence="2">
    <location>
        <begin position="183"/>
        <end position="203"/>
    </location>
</feature>
<feature type="topological domain" description="Perinuclear space" evidence="2">
    <location>
        <begin position="204"/>
        <end position="256"/>
    </location>
</feature>
<feature type="transmembrane region" description="Helical; Name=6" evidence="2">
    <location>
        <begin position="257"/>
        <end position="277"/>
    </location>
</feature>
<feature type="topological domain" description="Cytoplasmic" evidence="2">
    <location>
        <begin position="278"/>
        <end position="601"/>
    </location>
</feature>
<reference key="1">
    <citation type="journal article" date="1998" name="Mol. Biol. Cell">
        <title>cut11(+): a gene required for cell cycle-dependent spindle pole body anchoring in the nuclear envelope and bipolar spindle formation in Schizosaccharomyces pombe.</title>
        <authorList>
            <person name="West R.R."/>
            <person name="Vaisberg E.V."/>
            <person name="Ding R."/>
            <person name="Nurse P."/>
            <person name="McIntosh J.R."/>
        </authorList>
    </citation>
    <scope>NUCLEOTIDE SEQUENCE [MRNA]</scope>
    <scope>FUNCTION</scope>
    <scope>SUBCELLULAR LOCATION</scope>
    <source>
        <strain>972 / ATCC 24843</strain>
    </source>
</reference>
<reference key="2">
    <citation type="journal article" date="2002" name="Nature">
        <title>The genome sequence of Schizosaccharomyces pombe.</title>
        <authorList>
            <person name="Wood V."/>
            <person name="Gwilliam R."/>
            <person name="Rajandream M.A."/>
            <person name="Lyne M.H."/>
            <person name="Lyne R."/>
            <person name="Stewart A."/>
            <person name="Sgouros J.G."/>
            <person name="Peat N."/>
            <person name="Hayles J."/>
            <person name="Baker S.G."/>
            <person name="Basham D."/>
            <person name="Bowman S."/>
            <person name="Brooks K."/>
            <person name="Brown D."/>
            <person name="Brown S."/>
            <person name="Chillingworth T."/>
            <person name="Churcher C.M."/>
            <person name="Collins M."/>
            <person name="Connor R."/>
            <person name="Cronin A."/>
            <person name="Davis P."/>
            <person name="Feltwell T."/>
            <person name="Fraser A."/>
            <person name="Gentles S."/>
            <person name="Goble A."/>
            <person name="Hamlin N."/>
            <person name="Harris D.E."/>
            <person name="Hidalgo J."/>
            <person name="Hodgson G."/>
            <person name="Holroyd S."/>
            <person name="Hornsby T."/>
            <person name="Howarth S."/>
            <person name="Huckle E.J."/>
            <person name="Hunt S."/>
            <person name="Jagels K."/>
            <person name="James K.D."/>
            <person name="Jones L."/>
            <person name="Jones M."/>
            <person name="Leather S."/>
            <person name="McDonald S."/>
            <person name="McLean J."/>
            <person name="Mooney P."/>
            <person name="Moule S."/>
            <person name="Mungall K.L."/>
            <person name="Murphy L.D."/>
            <person name="Niblett D."/>
            <person name="Odell C."/>
            <person name="Oliver K."/>
            <person name="O'Neil S."/>
            <person name="Pearson D."/>
            <person name="Quail M.A."/>
            <person name="Rabbinowitsch E."/>
            <person name="Rutherford K.M."/>
            <person name="Rutter S."/>
            <person name="Saunders D."/>
            <person name="Seeger K."/>
            <person name="Sharp S."/>
            <person name="Skelton J."/>
            <person name="Simmonds M.N."/>
            <person name="Squares R."/>
            <person name="Squares S."/>
            <person name="Stevens K."/>
            <person name="Taylor K."/>
            <person name="Taylor R.G."/>
            <person name="Tivey A."/>
            <person name="Walsh S.V."/>
            <person name="Warren T."/>
            <person name="Whitehead S."/>
            <person name="Woodward J.R."/>
            <person name="Volckaert G."/>
            <person name="Aert R."/>
            <person name="Robben J."/>
            <person name="Grymonprez B."/>
            <person name="Weltjens I."/>
            <person name="Vanstreels E."/>
            <person name="Rieger M."/>
            <person name="Schaefer M."/>
            <person name="Mueller-Auer S."/>
            <person name="Gabel C."/>
            <person name="Fuchs M."/>
            <person name="Duesterhoeft A."/>
            <person name="Fritzc C."/>
            <person name="Holzer E."/>
            <person name="Moestl D."/>
            <person name="Hilbert H."/>
            <person name="Borzym K."/>
            <person name="Langer I."/>
            <person name="Beck A."/>
            <person name="Lehrach H."/>
            <person name="Reinhardt R."/>
            <person name="Pohl T.M."/>
            <person name="Eger P."/>
            <person name="Zimmermann W."/>
            <person name="Wedler H."/>
            <person name="Wambutt R."/>
            <person name="Purnelle B."/>
            <person name="Goffeau A."/>
            <person name="Cadieu E."/>
            <person name="Dreano S."/>
            <person name="Gloux S."/>
            <person name="Lelaure V."/>
            <person name="Mottier S."/>
            <person name="Galibert F."/>
            <person name="Aves S.J."/>
            <person name="Xiang Z."/>
            <person name="Hunt C."/>
            <person name="Moore K."/>
            <person name="Hurst S.M."/>
            <person name="Lucas M."/>
            <person name="Rochet M."/>
            <person name="Gaillardin C."/>
            <person name="Tallada V.A."/>
            <person name="Garzon A."/>
            <person name="Thode G."/>
            <person name="Daga R.R."/>
            <person name="Cruzado L."/>
            <person name="Jimenez J."/>
            <person name="Sanchez M."/>
            <person name="del Rey F."/>
            <person name="Benito J."/>
            <person name="Dominguez A."/>
            <person name="Revuelta J.L."/>
            <person name="Moreno S."/>
            <person name="Armstrong J."/>
            <person name="Forsburg S.L."/>
            <person name="Cerutti L."/>
            <person name="Lowe T."/>
            <person name="McCombie W.R."/>
            <person name="Paulsen I."/>
            <person name="Potashkin J."/>
            <person name="Shpakovski G.V."/>
            <person name="Ussery D."/>
            <person name="Barrell B.G."/>
            <person name="Nurse P."/>
        </authorList>
    </citation>
    <scope>NUCLEOTIDE SEQUENCE [LARGE SCALE GENOMIC DNA]</scope>
    <source>
        <strain>972 / ATCC 24843</strain>
    </source>
</reference>
<reference key="3">
    <citation type="journal article" date="2002" name="EMBO J.">
        <title>The fission yeast NIMA kinase Fin1p is required for spindle function and nuclear envelope integrity.</title>
        <authorList>
            <person name="Krien M.J.E."/>
            <person name="West R.R."/>
            <person name="John U.P."/>
            <person name="Koniaras K."/>
            <person name="McIntosh J.R."/>
            <person name="O'Connell M.J."/>
        </authorList>
    </citation>
    <scope>SUBCELLULAR LOCATION</scope>
</reference>
<name>NDC1_SCHPO</name>
<protein>
    <recommendedName>
        <fullName>Nuclear envelope protein ndc1</fullName>
    </recommendedName>
    <alternativeName>
        <fullName>Cell untimely torn protein 11</fullName>
    </alternativeName>
</protein>
<accession>O13961</accession>
<accession>Q9UTH4</accession>
<organism>
    <name type="scientific">Schizosaccharomyces pombe (strain 972 / ATCC 24843)</name>
    <name type="common">Fission yeast</name>
    <dbReference type="NCBI Taxonomy" id="284812"/>
    <lineage>
        <taxon>Eukaryota</taxon>
        <taxon>Fungi</taxon>
        <taxon>Dikarya</taxon>
        <taxon>Ascomycota</taxon>
        <taxon>Taphrinomycotina</taxon>
        <taxon>Schizosaccharomycetes</taxon>
        <taxon>Schizosaccharomycetales</taxon>
        <taxon>Schizosaccharomycetaceae</taxon>
        <taxon>Schizosaccharomyces</taxon>
    </lineage>
</organism>
<comment type="function">
    <text evidence="3">Component of the nuclear pore complex (NPC) and the spindle pole body (SPB), which plays a key role in de novo assembly and insertion of both structures in the nuclear envelope. Involved in the formation of the bipolar mitotic spindle. Anchors the spindle pole body in the nuclear envelope.</text>
</comment>
<comment type="subunit">
    <text evidence="1">Component of the nuclear pore complex (NPC). NPC constitutes the exclusive means of nucleocytoplasmic transport. NPCs allow the passive diffusion of ions and small molecules and the active, nuclear transport receptor-mediated bidirectional transport of macromolecules such as proteins, RNAs, ribonucleoparticles (RNPs), and ribosomal subunits across the nuclear envelope. Due to its 8-fold rotational symmetry, all subunits are present with 8 copies or multiples thereof.</text>
</comment>
<comment type="subcellular location">
    <subcellularLocation>
        <location>Nucleus</location>
        <location>Nuclear pore complex</location>
    </subcellularLocation>
    <subcellularLocation>
        <location>Nucleus membrane</location>
        <topology>Multi-pass membrane protein</topology>
    </subcellularLocation>
    <subcellularLocation>
        <location>Cytoplasm</location>
        <location>Cytoskeleton</location>
        <location>Microtubule organizing center</location>
        <location>Spindle pole body</location>
    </subcellularLocation>
    <text>Central core structure of the nuclear pore complex.</text>
</comment>
<comment type="similarity">
    <text evidence="4">Belongs to the NDC1 family.</text>
</comment>
<proteinExistence type="evidence at transcript level"/>